<organism>
    <name type="scientific">Fischerella ambigua (strain UTEX 1903)</name>
    <dbReference type="NCBI Taxonomy" id="230521"/>
    <lineage>
        <taxon>Bacteria</taxon>
        <taxon>Bacillati</taxon>
        <taxon>Cyanobacteriota</taxon>
        <taxon>Cyanophyceae</taxon>
        <taxon>Nostocales</taxon>
        <taxon>Hapalosiphonaceae</taxon>
        <taxon>Fischerella</taxon>
    </lineage>
</organism>
<name>AMBI3_FISAU</name>
<feature type="chain" id="PRO_0000453968" description="3-((Z)-2-isocyanoethenyl)-1H-indole synthase">
    <location>
        <begin position="1"/>
        <end position="273"/>
    </location>
</feature>
<feature type="binding site" evidence="1">
    <location>
        <position position="105"/>
    </location>
    <ligand>
        <name>Fe cation</name>
        <dbReference type="ChEBI" id="CHEBI:24875"/>
        <note>catalytic</note>
    </ligand>
</feature>
<feature type="binding site" evidence="1">
    <location>
        <position position="107"/>
    </location>
    <ligand>
        <name>Fe cation</name>
        <dbReference type="ChEBI" id="CHEBI:24875"/>
        <note>catalytic</note>
    </ligand>
</feature>
<feature type="binding site" evidence="1">
    <location>
        <position position="254"/>
    </location>
    <ligand>
        <name>Fe cation</name>
        <dbReference type="ChEBI" id="CHEBI:24875"/>
        <note>catalytic</note>
    </ligand>
</feature>
<comment type="function">
    <text evidence="2 3">Involved in the biosynthesis of ambiguines, a family of hapalindole-type alkaloids (PubMed:24180436). Responsible for the synthesis of Z-3-(2-isocyanoethen)-indole, a biosynthetic precursor to all ambiguines (PubMed:24180436, PubMed:28212039).</text>
</comment>
<comment type="catalytic activity">
    <reaction evidence="2 3">
        <text>(2S)-3-(1H-indol-3-yl)-2-isocyanopropanoate + 2-oxoglutarate + O2 + H(+) = 3-[(Z)-2-isocyanoethenyl]-1H-indole + succinate + 2 CO2 + H2O</text>
        <dbReference type="Rhea" id="RHEA:56700"/>
        <dbReference type="ChEBI" id="CHEBI:15377"/>
        <dbReference type="ChEBI" id="CHEBI:15378"/>
        <dbReference type="ChEBI" id="CHEBI:15379"/>
        <dbReference type="ChEBI" id="CHEBI:16526"/>
        <dbReference type="ChEBI" id="CHEBI:16810"/>
        <dbReference type="ChEBI" id="CHEBI:30031"/>
        <dbReference type="ChEBI" id="CHEBI:140434"/>
        <dbReference type="ChEBI" id="CHEBI:140652"/>
        <dbReference type="EC" id="1.14.20.11"/>
    </reaction>
    <physiologicalReaction direction="left-to-right" evidence="2 3">
        <dbReference type="Rhea" id="RHEA:56701"/>
    </physiologicalReaction>
</comment>
<comment type="cofactor">
    <cofactor evidence="3">
        <name>Fe(2+)</name>
        <dbReference type="ChEBI" id="CHEBI:29033"/>
    </cofactor>
    <text evidence="1">Binds 1 Fe(2+) per subunit.</text>
</comment>
<comment type="similarity">
    <text evidence="6">Belongs to the TfdA dioxygenase family.</text>
</comment>
<evidence type="ECO:0000250" key="1">
    <source>
        <dbReference type="UniProtKB" id="Q9XB59"/>
    </source>
</evidence>
<evidence type="ECO:0000269" key="2">
    <source>
    </source>
</evidence>
<evidence type="ECO:0000269" key="3">
    <source>
    </source>
</evidence>
<evidence type="ECO:0000303" key="4">
    <source>
    </source>
</evidence>
<evidence type="ECO:0000303" key="5">
    <source>
    </source>
</evidence>
<evidence type="ECO:0000305" key="6"/>
<sequence>MIVSTSVEQSAQFSVKSLTPFGALLEATEDHSDIQQLSIEQLCQLTWEHRLIVLRGFSLLEREELSTYCQRWGELLVWNFGTVLDLIVHQNPENYLFTNGNVPFHWDGAFAEAVPRFLFFQCLKAPEAGSGGESLFCDTVRILQNVSPQQREIWQKTEISYKTQKVAHYGGEITKSLVIKHPITGLSTLRFAEPLNDASVHLNPLYVEVCNLPAEEQNPFINELIENLYLPQNCFAHEWQEGDFLIADNHALLHGRNPFLSNSQRHLQRVHIL</sequence>
<keyword id="KW-0408">Iron</keyword>
<keyword id="KW-0479">Metal-binding</keyword>
<keyword id="KW-0560">Oxidoreductase</keyword>
<dbReference type="EC" id="1.14.20.11" evidence="2 3"/>
<dbReference type="EMBL" id="KF664586">
    <property type="protein sequence ID" value="AHB62773.1"/>
    <property type="molecule type" value="Genomic_DNA"/>
</dbReference>
<dbReference type="EMBL" id="KJ742065">
    <property type="protein sequence ID" value="AIJ28554.1"/>
    <property type="molecule type" value="Genomic_DNA"/>
</dbReference>
<dbReference type="EMBL" id="KX451322">
    <property type="protein sequence ID" value="APB62259.1"/>
    <property type="molecule type" value="Genomic_DNA"/>
</dbReference>
<dbReference type="SMR" id="V5TD18"/>
<dbReference type="KEGG" id="ag:AHB62773"/>
<dbReference type="BioCyc" id="MetaCyc:MONOMER-20400"/>
<dbReference type="BRENDA" id="1.14.20.11">
    <property type="organism ID" value="15535"/>
</dbReference>
<dbReference type="GO" id="GO:0046872">
    <property type="term" value="F:metal ion binding"/>
    <property type="evidence" value="ECO:0007669"/>
    <property type="project" value="UniProtKB-KW"/>
</dbReference>
<dbReference type="GO" id="GO:0016491">
    <property type="term" value="F:oxidoreductase activity"/>
    <property type="evidence" value="ECO:0007669"/>
    <property type="project" value="UniProtKB-KW"/>
</dbReference>
<dbReference type="Gene3D" id="3.60.130.10">
    <property type="entry name" value="Clavaminate synthase-like"/>
    <property type="match status" value="1"/>
</dbReference>
<dbReference type="InterPro" id="IPR050411">
    <property type="entry name" value="AlphaKG_dependent_hydroxylases"/>
</dbReference>
<dbReference type="InterPro" id="IPR042098">
    <property type="entry name" value="TauD-like_sf"/>
</dbReference>
<dbReference type="InterPro" id="IPR003819">
    <property type="entry name" value="TauD/TfdA-like"/>
</dbReference>
<dbReference type="PANTHER" id="PTHR10696">
    <property type="entry name" value="GAMMA-BUTYROBETAINE HYDROXYLASE-RELATED"/>
    <property type="match status" value="1"/>
</dbReference>
<dbReference type="PANTHER" id="PTHR10696:SF53">
    <property type="entry name" value="TYROSINE ISONITRILE DESATURASE"/>
    <property type="match status" value="1"/>
</dbReference>
<dbReference type="Pfam" id="PF02668">
    <property type="entry name" value="TauD"/>
    <property type="match status" value="1"/>
</dbReference>
<dbReference type="SUPFAM" id="SSF51197">
    <property type="entry name" value="Clavaminate synthase-like"/>
    <property type="match status" value="1"/>
</dbReference>
<proteinExistence type="evidence at protein level"/>
<protein>
    <recommendedName>
        <fullName evidence="6">3-((Z)-2-isocyanoethenyl)-1H-indole synthase</fullName>
        <ecNumber evidence="2 3">1.14.20.11</ecNumber>
    </recommendedName>
</protein>
<gene>
    <name evidence="4" type="primary">ambI3</name>
    <name evidence="5" type="synonym">famH3</name>
</gene>
<reference key="1">
    <citation type="journal article" date="2014" name="ACS Chem. Biol.">
        <title>Biosynthesis of ambiguine indole alkaloids in cyanobacterium Fischerella ambigua.</title>
        <authorList>
            <person name="Hillwig M.L."/>
            <person name="Zhu Q."/>
            <person name="Liu X."/>
        </authorList>
    </citation>
    <scope>NUCLEOTIDE SEQUENCE [GENOMIC DNA]</scope>
    <scope>FUNCTION</scope>
    <scope>CATALYTIC ACTIVITY</scope>
    <source>
        <strain>UTEX 1903</strain>
    </source>
</reference>
<reference key="2">
    <citation type="journal article" date="2014" name="BMC Microbiol.">
        <title>Comparative analysis of hapalindole, ambiguine and welwitindolinone gene clusters and reconstitution of indole-isonitrile biosynthesis from cyanobacteria.</title>
        <authorList>
            <person name="Micallef M.L."/>
            <person name="Sharma D."/>
            <person name="Bunn B.M."/>
            <person name="Gerwick L."/>
            <person name="Viswanathan R."/>
            <person name="Moffitt M.C."/>
        </authorList>
    </citation>
    <scope>NUCLEOTIDE SEQUENCE [GENOMIC DNA]</scope>
    <source>
        <strain>UTEX 1903</strain>
    </source>
</reference>
<reference key="3">
    <citation type="journal article" date="2015" name="J. Am. Chem. Soc.">
        <title>Hapalindole/ambiguine biogenesis is mediated by a cope rearrangement, C-C bond-forming cascade.</title>
        <authorList>
            <person name="Li S."/>
            <person name="Lowell A.N."/>
            <person name="Yu F."/>
            <person name="Raveh A."/>
            <person name="Newmister S.A."/>
            <person name="Bair N."/>
            <person name="Schaub J.M."/>
            <person name="Williams R.M."/>
            <person name="Sherman D.H."/>
        </authorList>
    </citation>
    <scope>NUCLEOTIDE SEQUENCE [GENOMIC DNA]</scope>
    <source>
        <strain>UTEX 1903</strain>
    </source>
</reference>
<reference key="4">
    <citation type="journal article" date="2017" name="Org. Lett.">
        <title>In vitro stepwise reconstitution of amino acid derived vinyl isocyanide biosynthesis: detection of an elusive intermediate.</title>
        <authorList>
            <person name="Chang W.C."/>
            <person name="Sanyal D."/>
            <person name="Huang J.L."/>
            <person name="Ittiamornkul K."/>
            <person name="Zhu Q."/>
            <person name="Liu X."/>
        </authorList>
    </citation>
    <scope>FUNCTION</scope>
    <scope>CATALYTIC ACTIVITY</scope>
    <scope>COFACTOR</scope>
</reference>
<accession>V5TD18</accession>